<accession>A9AJR1</accession>
<sequence length="423" mass="46389">MADKKGSNSEKLLYCSFCGKSQHEVKKLIAGPSVFICDECIDLCNEIIRDEAAAAGVEASLSRSDLPSPQEIRDILDQYVIGQERAKKILAVAVYNHYKRLKHLDKKDDVELSKSNILLIGPTGSGKTLLAQTLARLLNVPFVIADATTLTEAGYVGEDVENIIQKLLQNCNYEVDKAQRGIVYIDEIDKISRKSDNPSITRDVSGEGVQQALLKLVEGTMASVPPQGGRKHPNQDFIQVDTTNILFICGGAFDGLEKVITDRTEKTGIGFGATVKSKQDRDAGEVLRDVEPEDLIKFGLIPELIGRLPVVATLGKLDEAALMKILVEPKNALVKQYHKLFAMERVELEIRPAALQAVARKAIRRKTGARGLRSIIEQALLDVMYELPTMKGVSKVIIDENVIDGDGKPLLIYEDTPKVAGSN</sequence>
<proteinExistence type="inferred from homology"/>
<organism>
    <name type="scientific">Burkholderia multivorans (strain ATCC 17616 / 249)</name>
    <dbReference type="NCBI Taxonomy" id="395019"/>
    <lineage>
        <taxon>Bacteria</taxon>
        <taxon>Pseudomonadati</taxon>
        <taxon>Pseudomonadota</taxon>
        <taxon>Betaproteobacteria</taxon>
        <taxon>Burkholderiales</taxon>
        <taxon>Burkholderiaceae</taxon>
        <taxon>Burkholderia</taxon>
        <taxon>Burkholderia cepacia complex</taxon>
    </lineage>
</organism>
<comment type="function">
    <text evidence="1">ATP-dependent specificity component of the Clp protease. It directs the protease to specific substrates. Can perform chaperone functions in the absence of ClpP.</text>
</comment>
<comment type="subunit">
    <text evidence="1">Component of the ClpX-ClpP complex. Forms a hexameric ring that, in the presence of ATP, binds to fourteen ClpP subunits assembled into a disk-like structure with a central cavity, resembling the structure of eukaryotic proteasomes.</text>
</comment>
<comment type="similarity">
    <text evidence="1">Belongs to the ClpX chaperone family.</text>
</comment>
<keyword id="KW-0067">ATP-binding</keyword>
<keyword id="KW-0143">Chaperone</keyword>
<keyword id="KW-0479">Metal-binding</keyword>
<keyword id="KW-0547">Nucleotide-binding</keyword>
<keyword id="KW-1185">Reference proteome</keyword>
<keyword id="KW-0862">Zinc</keyword>
<evidence type="ECO:0000255" key="1">
    <source>
        <dbReference type="HAMAP-Rule" id="MF_00175"/>
    </source>
</evidence>
<evidence type="ECO:0000255" key="2">
    <source>
        <dbReference type="PROSITE-ProRule" id="PRU01250"/>
    </source>
</evidence>
<gene>
    <name evidence="1" type="primary">clpX</name>
    <name type="ordered locus">Bmul_1350</name>
    <name type="ordered locus">BMULJ_01895</name>
</gene>
<protein>
    <recommendedName>
        <fullName evidence="1">ATP-dependent Clp protease ATP-binding subunit ClpX</fullName>
    </recommendedName>
</protein>
<dbReference type="EMBL" id="CP000868">
    <property type="protein sequence ID" value="ABX15038.1"/>
    <property type="molecule type" value="Genomic_DNA"/>
</dbReference>
<dbReference type="EMBL" id="AP009385">
    <property type="protein sequence ID" value="BAG43813.1"/>
    <property type="molecule type" value="Genomic_DNA"/>
</dbReference>
<dbReference type="RefSeq" id="WP_006402239.1">
    <property type="nucleotide sequence ID" value="NC_010804.1"/>
</dbReference>
<dbReference type="SMR" id="A9AJR1"/>
<dbReference type="STRING" id="395019.BMULJ_01895"/>
<dbReference type="GeneID" id="89570375"/>
<dbReference type="KEGG" id="bmj:BMULJ_01895"/>
<dbReference type="KEGG" id="bmu:Bmul_1350"/>
<dbReference type="eggNOG" id="COG1219">
    <property type="taxonomic scope" value="Bacteria"/>
</dbReference>
<dbReference type="HOGENOM" id="CLU_014218_8_2_4"/>
<dbReference type="Proteomes" id="UP000008815">
    <property type="component" value="Chromosome 1"/>
</dbReference>
<dbReference type="GO" id="GO:0009376">
    <property type="term" value="C:HslUV protease complex"/>
    <property type="evidence" value="ECO:0007669"/>
    <property type="project" value="TreeGrafter"/>
</dbReference>
<dbReference type="GO" id="GO:0005524">
    <property type="term" value="F:ATP binding"/>
    <property type="evidence" value="ECO:0007669"/>
    <property type="project" value="UniProtKB-UniRule"/>
</dbReference>
<dbReference type="GO" id="GO:0016887">
    <property type="term" value="F:ATP hydrolysis activity"/>
    <property type="evidence" value="ECO:0007669"/>
    <property type="project" value="InterPro"/>
</dbReference>
<dbReference type="GO" id="GO:0140662">
    <property type="term" value="F:ATP-dependent protein folding chaperone"/>
    <property type="evidence" value="ECO:0007669"/>
    <property type="project" value="InterPro"/>
</dbReference>
<dbReference type="GO" id="GO:0046983">
    <property type="term" value="F:protein dimerization activity"/>
    <property type="evidence" value="ECO:0007669"/>
    <property type="project" value="InterPro"/>
</dbReference>
<dbReference type="GO" id="GO:0051082">
    <property type="term" value="F:unfolded protein binding"/>
    <property type="evidence" value="ECO:0007669"/>
    <property type="project" value="UniProtKB-UniRule"/>
</dbReference>
<dbReference type="GO" id="GO:0008270">
    <property type="term" value="F:zinc ion binding"/>
    <property type="evidence" value="ECO:0007669"/>
    <property type="project" value="InterPro"/>
</dbReference>
<dbReference type="GO" id="GO:0051301">
    <property type="term" value="P:cell division"/>
    <property type="evidence" value="ECO:0007669"/>
    <property type="project" value="TreeGrafter"/>
</dbReference>
<dbReference type="GO" id="GO:0051603">
    <property type="term" value="P:proteolysis involved in protein catabolic process"/>
    <property type="evidence" value="ECO:0007669"/>
    <property type="project" value="TreeGrafter"/>
</dbReference>
<dbReference type="CDD" id="cd19497">
    <property type="entry name" value="RecA-like_ClpX"/>
    <property type="match status" value="1"/>
</dbReference>
<dbReference type="FunFam" id="1.10.8.60:FF:000002">
    <property type="entry name" value="ATP-dependent Clp protease ATP-binding subunit ClpX"/>
    <property type="match status" value="1"/>
</dbReference>
<dbReference type="FunFam" id="3.40.50.300:FF:000005">
    <property type="entry name" value="ATP-dependent Clp protease ATP-binding subunit ClpX"/>
    <property type="match status" value="1"/>
</dbReference>
<dbReference type="Gene3D" id="1.10.8.60">
    <property type="match status" value="1"/>
</dbReference>
<dbReference type="Gene3D" id="6.20.220.10">
    <property type="entry name" value="ClpX chaperone, C4-type zinc finger domain"/>
    <property type="match status" value="1"/>
</dbReference>
<dbReference type="Gene3D" id="3.40.50.300">
    <property type="entry name" value="P-loop containing nucleotide triphosphate hydrolases"/>
    <property type="match status" value="1"/>
</dbReference>
<dbReference type="HAMAP" id="MF_00175">
    <property type="entry name" value="ClpX"/>
    <property type="match status" value="1"/>
</dbReference>
<dbReference type="InterPro" id="IPR003593">
    <property type="entry name" value="AAA+_ATPase"/>
</dbReference>
<dbReference type="InterPro" id="IPR050052">
    <property type="entry name" value="ATP-dep_Clp_protease_ClpX"/>
</dbReference>
<dbReference type="InterPro" id="IPR003959">
    <property type="entry name" value="ATPase_AAA_core"/>
</dbReference>
<dbReference type="InterPro" id="IPR019489">
    <property type="entry name" value="Clp_ATPase_C"/>
</dbReference>
<dbReference type="InterPro" id="IPR004487">
    <property type="entry name" value="Clp_protease_ATP-bd_su_ClpX"/>
</dbReference>
<dbReference type="InterPro" id="IPR046425">
    <property type="entry name" value="ClpX_bact"/>
</dbReference>
<dbReference type="InterPro" id="IPR027417">
    <property type="entry name" value="P-loop_NTPase"/>
</dbReference>
<dbReference type="InterPro" id="IPR010603">
    <property type="entry name" value="Znf_CppX_C4"/>
</dbReference>
<dbReference type="InterPro" id="IPR038366">
    <property type="entry name" value="Znf_CppX_C4_sf"/>
</dbReference>
<dbReference type="NCBIfam" id="TIGR00382">
    <property type="entry name" value="clpX"/>
    <property type="match status" value="1"/>
</dbReference>
<dbReference type="NCBIfam" id="NF003745">
    <property type="entry name" value="PRK05342.1"/>
    <property type="match status" value="1"/>
</dbReference>
<dbReference type="PANTHER" id="PTHR48102:SF7">
    <property type="entry name" value="ATP-DEPENDENT CLP PROTEASE ATP-BINDING SUBUNIT CLPX-LIKE, MITOCHONDRIAL"/>
    <property type="match status" value="1"/>
</dbReference>
<dbReference type="PANTHER" id="PTHR48102">
    <property type="entry name" value="ATP-DEPENDENT CLP PROTEASE ATP-BINDING SUBUNIT CLPX-LIKE, MITOCHONDRIAL-RELATED"/>
    <property type="match status" value="1"/>
</dbReference>
<dbReference type="Pfam" id="PF07724">
    <property type="entry name" value="AAA_2"/>
    <property type="match status" value="1"/>
</dbReference>
<dbReference type="Pfam" id="PF10431">
    <property type="entry name" value="ClpB_D2-small"/>
    <property type="match status" value="1"/>
</dbReference>
<dbReference type="Pfam" id="PF06689">
    <property type="entry name" value="zf-C4_ClpX"/>
    <property type="match status" value="1"/>
</dbReference>
<dbReference type="SMART" id="SM00382">
    <property type="entry name" value="AAA"/>
    <property type="match status" value="1"/>
</dbReference>
<dbReference type="SMART" id="SM01086">
    <property type="entry name" value="ClpB_D2-small"/>
    <property type="match status" value="1"/>
</dbReference>
<dbReference type="SMART" id="SM00994">
    <property type="entry name" value="zf-C4_ClpX"/>
    <property type="match status" value="1"/>
</dbReference>
<dbReference type="SUPFAM" id="SSF57716">
    <property type="entry name" value="Glucocorticoid receptor-like (DNA-binding domain)"/>
    <property type="match status" value="1"/>
</dbReference>
<dbReference type="SUPFAM" id="SSF52540">
    <property type="entry name" value="P-loop containing nucleoside triphosphate hydrolases"/>
    <property type="match status" value="1"/>
</dbReference>
<dbReference type="PROSITE" id="PS51902">
    <property type="entry name" value="CLPX_ZB"/>
    <property type="match status" value="1"/>
</dbReference>
<feature type="chain" id="PRO_1000097930" description="ATP-dependent Clp protease ATP-binding subunit ClpX">
    <location>
        <begin position="1"/>
        <end position="423"/>
    </location>
</feature>
<feature type="domain" description="ClpX-type ZB" evidence="2">
    <location>
        <begin position="3"/>
        <end position="56"/>
    </location>
</feature>
<feature type="binding site" evidence="2">
    <location>
        <position position="15"/>
    </location>
    <ligand>
        <name>Zn(2+)</name>
        <dbReference type="ChEBI" id="CHEBI:29105"/>
    </ligand>
</feature>
<feature type="binding site" evidence="2">
    <location>
        <position position="18"/>
    </location>
    <ligand>
        <name>Zn(2+)</name>
        <dbReference type="ChEBI" id="CHEBI:29105"/>
    </ligand>
</feature>
<feature type="binding site" evidence="2">
    <location>
        <position position="37"/>
    </location>
    <ligand>
        <name>Zn(2+)</name>
        <dbReference type="ChEBI" id="CHEBI:29105"/>
    </ligand>
</feature>
<feature type="binding site" evidence="2">
    <location>
        <position position="40"/>
    </location>
    <ligand>
        <name>Zn(2+)</name>
        <dbReference type="ChEBI" id="CHEBI:29105"/>
    </ligand>
</feature>
<feature type="binding site" evidence="1">
    <location>
        <begin position="122"/>
        <end position="129"/>
    </location>
    <ligand>
        <name>ATP</name>
        <dbReference type="ChEBI" id="CHEBI:30616"/>
    </ligand>
</feature>
<name>CLPX_BURM1</name>
<reference key="1">
    <citation type="submission" date="2007-10" db="EMBL/GenBank/DDBJ databases">
        <title>Complete sequence of chromosome 1 of Burkholderia multivorans ATCC 17616.</title>
        <authorList>
            <person name="Copeland A."/>
            <person name="Lucas S."/>
            <person name="Lapidus A."/>
            <person name="Barry K."/>
            <person name="Glavina del Rio T."/>
            <person name="Dalin E."/>
            <person name="Tice H."/>
            <person name="Pitluck S."/>
            <person name="Chain P."/>
            <person name="Malfatti S."/>
            <person name="Shin M."/>
            <person name="Vergez L."/>
            <person name="Schmutz J."/>
            <person name="Larimer F."/>
            <person name="Land M."/>
            <person name="Hauser L."/>
            <person name="Kyrpides N."/>
            <person name="Kim E."/>
            <person name="Tiedje J."/>
            <person name="Richardson P."/>
        </authorList>
    </citation>
    <scope>NUCLEOTIDE SEQUENCE [LARGE SCALE GENOMIC DNA]</scope>
    <source>
        <strain>ATCC 17616 / 249</strain>
    </source>
</reference>
<reference key="2">
    <citation type="submission" date="2007-04" db="EMBL/GenBank/DDBJ databases">
        <title>Complete genome sequence of Burkholderia multivorans ATCC 17616.</title>
        <authorList>
            <person name="Ohtsubo Y."/>
            <person name="Yamashita A."/>
            <person name="Kurokawa K."/>
            <person name="Takami H."/>
            <person name="Yuhara S."/>
            <person name="Nishiyama E."/>
            <person name="Endo R."/>
            <person name="Miyazaki R."/>
            <person name="Ono A."/>
            <person name="Yano K."/>
            <person name="Ito M."/>
            <person name="Sota M."/>
            <person name="Yuji N."/>
            <person name="Hattori M."/>
            <person name="Tsuda M."/>
        </authorList>
    </citation>
    <scope>NUCLEOTIDE SEQUENCE [LARGE SCALE GENOMIC DNA]</scope>
    <source>
        <strain>ATCC 17616 / 249</strain>
    </source>
</reference>